<accession>Q63610</accession>
<accession>Q63599</accession>
<accession>Q63600</accession>
<accession>Q63601</accession>
<gene>
    <name type="primary">Tpm3</name>
    <name type="synonym">Tpm-5</name>
    <name type="synonym">Tpm5</name>
</gene>
<name>TPM3_RAT</name>
<keyword id="KW-0007">Acetylation</keyword>
<keyword id="KW-0009">Actin-binding</keyword>
<keyword id="KW-0025">Alternative splicing</keyword>
<keyword id="KW-0175">Coiled coil</keyword>
<keyword id="KW-0963">Cytoplasm</keyword>
<keyword id="KW-0206">Cytoskeleton</keyword>
<keyword id="KW-0903">Direct protein sequencing</keyword>
<keyword id="KW-0514">Muscle protein</keyword>
<keyword id="KW-0597">Phosphoprotein</keyword>
<keyword id="KW-1185">Reference proteome</keyword>
<sequence length="248" mass="29007">MAGSTTIEAVKRKIQVLQQQADDAEERAERLQREVEGERRAREQAEAEVASLNRRIQLVEEELDRAQERLATALQKLEEAEKAADESERGMKVIENRALKDEEKMELQEIQLKEAKHIAEEADRKYEEVARKLVIIEGDLERTEERAELAESRCREMDEQIRLMDQNLKCLSAAEEKYSQKEDKYEEEIKILTDKLKEAETRAEFAERSVAKLEKTIDDLEDKLKCTKEEHLCTQRMLDQTLLDLNEM</sequence>
<evidence type="ECO:0000250" key="1">
    <source>
        <dbReference type="UniProtKB" id="P04692"/>
    </source>
</evidence>
<evidence type="ECO:0000250" key="2">
    <source>
        <dbReference type="UniProtKB" id="P06753"/>
    </source>
</evidence>
<evidence type="ECO:0000250" key="3">
    <source>
        <dbReference type="UniProtKB" id="P07951"/>
    </source>
</evidence>
<evidence type="ECO:0000250" key="4">
    <source>
        <dbReference type="UniProtKB" id="P09493"/>
    </source>
</evidence>
<evidence type="ECO:0000250" key="5">
    <source>
        <dbReference type="UniProtKB" id="P58775"/>
    </source>
</evidence>
<evidence type="ECO:0000255" key="6"/>
<evidence type="ECO:0000256" key="7">
    <source>
        <dbReference type="SAM" id="MobiDB-lite"/>
    </source>
</evidence>
<evidence type="ECO:0000269" key="8">
    <source ref="3"/>
</evidence>
<evidence type="ECO:0000303" key="9">
    <source>
    </source>
</evidence>
<evidence type="ECO:0000305" key="10"/>
<reference key="1">
    <citation type="journal article" date="1994" name="Gene">
        <title>Identification of novel alternatively spliced isoforms of the tropomyosin-encoding gene, TMnm, in the rat cochlea.</title>
        <authorList>
            <person name="Beisel K.W."/>
            <person name="Kennedy J.E."/>
        </authorList>
    </citation>
    <scope>NUCLEOTIDE SEQUENCE [MRNA] (ISOFORMS 1; 2 AND 3)</scope>
    <source>
        <strain>Sprague-Dawley</strain>
        <tissue>Cochlea</tissue>
    </source>
</reference>
<reference key="2">
    <citation type="journal article" date="1997" name="J. Cancer Res. Clin. Oncol.">
        <title>Transformation-related expression of a low-molecular-mass tropomyosin isoform TM5/TM30nm in transformed rat fibroblastic cell lines.</title>
        <authorList>
            <person name="Miyado K."/>
            <person name="Sato M."/>
            <person name="Taniguchi S."/>
        </authorList>
    </citation>
    <scope>NUCLEOTIDE SEQUENCE [MRNA] (ISOFORM 1)</scope>
    <source>
        <strain>Sprague-Dawley</strain>
    </source>
</reference>
<reference key="3">
    <citation type="submission" date="2009-06" db="UniProtKB">
        <authorList>
            <person name="Bienvenut W.V."/>
            <person name="von Kriegsheim A."/>
            <person name="Kolch W."/>
        </authorList>
    </citation>
    <scope>PROTEIN SEQUENCE OF 2-27 AND 41-65</scope>
    <scope>CLEAVAGE OF INITIATOR METHIONINE</scope>
    <scope>ACETYLATION AT ALA-2</scope>
    <scope>IDENTIFICATION BY MASS SPECTROMETRY</scope>
    <source>
        <tissue>Fibroblast</tissue>
    </source>
</reference>
<reference key="4">
    <citation type="submission" date="2007-09" db="UniProtKB">
        <authorList>
            <person name="Lubec G."/>
            <person name="Chen W.-Q."/>
            <person name="Kang S.U."/>
            <person name="Lubec S."/>
        </authorList>
    </citation>
    <scope>PROTEIN SEQUENCE OF 13-27; 55-65; 105-113; 132-142; 182-190 AND 216-225</scope>
    <scope>PARTIAL PROTEIN SEQUENCE (ISOFORMS 2 AND 3)</scope>
    <scope>IDENTIFICATION BY MASS SPECTROMETRY</scope>
    <source>
        <strain>Sprague-Dawley</strain>
        <tissue>Brain</tissue>
        <tissue>Hippocampus</tissue>
    </source>
</reference>
<dbReference type="EMBL" id="L24775">
    <property type="protein sequence ID" value="AAA21721.1"/>
    <property type="molecule type" value="mRNA"/>
</dbReference>
<dbReference type="EMBL" id="L24776">
    <property type="protein sequence ID" value="AAA42263.1"/>
    <property type="molecule type" value="mRNA"/>
</dbReference>
<dbReference type="EMBL" id="L24777">
    <property type="protein sequence ID" value="AAA42264.1"/>
    <property type="molecule type" value="mRNA"/>
</dbReference>
<dbReference type="EMBL" id="X72859">
    <property type="protein sequence ID" value="CAA51382.1"/>
    <property type="molecule type" value="mRNA"/>
</dbReference>
<dbReference type="PIR" id="I53784">
    <property type="entry name" value="I53784"/>
</dbReference>
<dbReference type="PIR" id="I67849">
    <property type="entry name" value="I67849"/>
</dbReference>
<dbReference type="PIR" id="I67850">
    <property type="entry name" value="I67850"/>
</dbReference>
<dbReference type="PIR" id="S34124">
    <property type="entry name" value="S34124"/>
</dbReference>
<dbReference type="RefSeq" id="NP_001288215.1">
    <molecule id="Q63610-2"/>
    <property type="nucleotide sequence ID" value="NM_001301286.1"/>
</dbReference>
<dbReference type="RefSeq" id="NP_476556.2">
    <molecule id="Q63610-3"/>
    <property type="nucleotide sequence ID" value="NM_057208.2"/>
</dbReference>
<dbReference type="RefSeq" id="NP_775134.2">
    <molecule id="Q63610-1"/>
    <property type="nucleotide sequence ID" value="NM_173111.2"/>
</dbReference>
<dbReference type="RefSeq" id="XP_063137267.1">
    <molecule id="Q63610-2"/>
    <property type="nucleotide sequence ID" value="XM_063281197.1"/>
</dbReference>
<dbReference type="SMR" id="Q63610"/>
<dbReference type="BioGRID" id="250770">
    <property type="interactions" value="9"/>
</dbReference>
<dbReference type="CORUM" id="Q63610"/>
<dbReference type="FunCoup" id="Q63610">
    <property type="interactions" value="200"/>
</dbReference>
<dbReference type="IntAct" id="Q63610">
    <property type="interactions" value="5"/>
</dbReference>
<dbReference type="MINT" id="Q63610"/>
<dbReference type="iPTMnet" id="Q63610"/>
<dbReference type="PhosphoSitePlus" id="Q63610"/>
<dbReference type="SwissPalm" id="Q63610"/>
<dbReference type="jPOST" id="Q63610"/>
<dbReference type="PaxDb" id="10116-ENSRNOP00000023567"/>
<dbReference type="GeneID" id="117557"/>
<dbReference type="KEGG" id="rno:117557"/>
<dbReference type="UCSC" id="RGD:621546">
    <molecule id="Q63610-1"/>
    <property type="organism name" value="rat"/>
</dbReference>
<dbReference type="AGR" id="RGD:621546"/>
<dbReference type="CTD" id="7170"/>
<dbReference type="RGD" id="621546">
    <property type="gene designation" value="Tpm3"/>
</dbReference>
<dbReference type="VEuPathDB" id="HostDB:ENSRNOG00000017441"/>
<dbReference type="eggNOG" id="KOG1003">
    <property type="taxonomic scope" value="Eukaryota"/>
</dbReference>
<dbReference type="HOGENOM" id="CLU_055027_0_0_1"/>
<dbReference type="InParanoid" id="Q63610"/>
<dbReference type="PhylomeDB" id="Q63610"/>
<dbReference type="PRO" id="PR:Q63610"/>
<dbReference type="Proteomes" id="UP000002494">
    <property type="component" value="Chromosome 2"/>
</dbReference>
<dbReference type="Bgee" id="ENSRNOG00000017441">
    <property type="expression patterns" value="Expressed in spleen and 19 other cell types or tissues"/>
</dbReference>
<dbReference type="ExpressionAtlas" id="Q63610">
    <property type="expression patterns" value="baseline and differential"/>
</dbReference>
<dbReference type="GO" id="GO:0005884">
    <property type="term" value="C:actin filament"/>
    <property type="evidence" value="ECO:0000318"/>
    <property type="project" value="GO_Central"/>
</dbReference>
<dbReference type="GO" id="GO:0005903">
    <property type="term" value="C:brush border"/>
    <property type="evidence" value="ECO:0000314"/>
    <property type="project" value="UniProtKB"/>
</dbReference>
<dbReference type="GO" id="GO:0032154">
    <property type="term" value="C:cleavage furrow"/>
    <property type="evidence" value="ECO:0000266"/>
    <property type="project" value="RGD"/>
</dbReference>
<dbReference type="GO" id="GO:0030863">
    <property type="term" value="C:cortical cytoskeleton"/>
    <property type="evidence" value="ECO:0000266"/>
    <property type="project" value="RGD"/>
</dbReference>
<dbReference type="GO" id="GO:0005737">
    <property type="term" value="C:cytoplasm"/>
    <property type="evidence" value="ECO:0000266"/>
    <property type="project" value="RGD"/>
</dbReference>
<dbReference type="GO" id="GO:0030426">
    <property type="term" value="C:growth cone"/>
    <property type="evidence" value="ECO:0000266"/>
    <property type="project" value="RGD"/>
</dbReference>
<dbReference type="GO" id="GO:0043005">
    <property type="term" value="C:neuron projection"/>
    <property type="evidence" value="ECO:0000266"/>
    <property type="project" value="RGD"/>
</dbReference>
<dbReference type="GO" id="GO:0002102">
    <property type="term" value="C:podosome"/>
    <property type="evidence" value="ECO:0000266"/>
    <property type="project" value="RGD"/>
</dbReference>
<dbReference type="GO" id="GO:0001725">
    <property type="term" value="C:stress fiber"/>
    <property type="evidence" value="ECO:0000266"/>
    <property type="project" value="RGD"/>
</dbReference>
<dbReference type="GO" id="GO:0051015">
    <property type="term" value="F:actin filament binding"/>
    <property type="evidence" value="ECO:0000266"/>
    <property type="project" value="RGD"/>
</dbReference>
<dbReference type="GO" id="GO:0007015">
    <property type="term" value="P:actin filament organization"/>
    <property type="evidence" value="ECO:0000318"/>
    <property type="project" value="GO_Central"/>
</dbReference>
<dbReference type="GO" id="GO:0006936">
    <property type="term" value="P:muscle contraction"/>
    <property type="evidence" value="ECO:0000318"/>
    <property type="project" value="GO_Central"/>
</dbReference>
<dbReference type="FunFam" id="1.20.5.170:FF:000001">
    <property type="entry name" value="Tropomyosin alpha-1 chain isoform 1"/>
    <property type="match status" value="1"/>
</dbReference>
<dbReference type="FunFam" id="1.20.5.340:FF:000001">
    <property type="entry name" value="Tropomyosin alpha-1 chain isoform 2"/>
    <property type="match status" value="1"/>
</dbReference>
<dbReference type="FunFam" id="1.20.5.370:FF:000004">
    <property type="entry name" value="tropomyosin alpha-1 chain isoform X1"/>
    <property type="match status" value="1"/>
</dbReference>
<dbReference type="Gene3D" id="1.20.5.170">
    <property type="match status" value="1"/>
</dbReference>
<dbReference type="Gene3D" id="1.20.5.370">
    <property type="match status" value="1"/>
</dbReference>
<dbReference type="InterPro" id="IPR000533">
    <property type="entry name" value="Tropomyosin"/>
</dbReference>
<dbReference type="InterPro" id="IPR014751">
    <property type="entry name" value="XRCC4-like_C"/>
</dbReference>
<dbReference type="PANTHER" id="PTHR19269">
    <property type="entry name" value="TROPOMYOSIN"/>
    <property type="match status" value="1"/>
</dbReference>
<dbReference type="Pfam" id="PF00261">
    <property type="entry name" value="Tropomyosin"/>
    <property type="match status" value="1"/>
</dbReference>
<dbReference type="PRINTS" id="PR00194">
    <property type="entry name" value="TROPOMYOSIN"/>
</dbReference>
<dbReference type="SUPFAM" id="SSF57997">
    <property type="entry name" value="Tropomyosin"/>
    <property type="match status" value="1"/>
</dbReference>
<dbReference type="PROSITE" id="PS00326">
    <property type="entry name" value="TROPOMYOSIN"/>
    <property type="match status" value="1"/>
</dbReference>
<organism>
    <name type="scientific">Rattus norvegicus</name>
    <name type="common">Rat</name>
    <dbReference type="NCBI Taxonomy" id="10116"/>
    <lineage>
        <taxon>Eukaryota</taxon>
        <taxon>Metazoa</taxon>
        <taxon>Chordata</taxon>
        <taxon>Craniata</taxon>
        <taxon>Vertebrata</taxon>
        <taxon>Euteleostomi</taxon>
        <taxon>Mammalia</taxon>
        <taxon>Eutheria</taxon>
        <taxon>Euarchontoglires</taxon>
        <taxon>Glires</taxon>
        <taxon>Rodentia</taxon>
        <taxon>Myomorpha</taxon>
        <taxon>Muroidea</taxon>
        <taxon>Muridae</taxon>
        <taxon>Murinae</taxon>
        <taxon>Rattus</taxon>
    </lineage>
</organism>
<proteinExistence type="evidence at protein level"/>
<comment type="function">
    <text evidence="4">Binds to actin filaments in muscle and non-muscle cells. Plays a central role, in association with the troponin complex, in the calcium dependent regulation of vertebrate striated muscle contraction. Smooth muscle contraction is regulated by interaction with caldesmon. In non-muscle cells is implicated in stabilizing cytoskeleton actin filaments.</text>
</comment>
<comment type="subunit">
    <text evidence="1 2">Homodimer. Heterodimer of an alpha (TPM1, TPM3 or TPM4) and a beta (TPM2) chain (By similarity). Interacts with TMOD1 (By similarity). Interacts with TNNT1 (By similarity).</text>
</comment>
<comment type="subcellular location">
    <subcellularLocation>
        <location evidence="10">Cytoplasm</location>
        <location evidence="10">Cytoskeleton</location>
    </subcellularLocation>
</comment>
<comment type="alternative products">
    <event type="alternative splicing"/>
    <isoform>
        <id>Q63610-1</id>
        <name>1</name>
        <name>Tpm3_v1</name>
        <sequence type="displayed"/>
    </isoform>
    <isoform>
        <id>Q63610-2</id>
        <name>2</name>
        <name>Tpm3_v3</name>
        <sequence type="described" ref="VSP_025995 VSP_025997"/>
    </isoform>
    <isoform>
        <id>Q63610-3</id>
        <name>3</name>
        <name>Tpm3_v2</name>
        <sequence type="described" ref="VSP_025995 VSP_025996"/>
    </isoform>
</comment>
<comment type="domain">
    <text>The molecule is in a coiled coil structure that is formed by 2 polypeptide chains. The sequence exhibits a prominent seven-residues periodicity.</text>
</comment>
<comment type="similarity">
    <text evidence="10">Belongs to the tropomyosin family.</text>
</comment>
<feature type="initiator methionine" description="Removed" evidence="8">
    <location>
        <position position="1"/>
    </location>
</feature>
<feature type="chain" id="PRO_0000289259" description="Tropomyosin alpha-3 chain">
    <location>
        <begin position="2"/>
        <end position="248"/>
    </location>
</feature>
<feature type="region of interest" description="Disordered" evidence="7">
    <location>
        <begin position="21"/>
        <end position="42"/>
    </location>
</feature>
<feature type="coiled-coil region" evidence="6">
    <location>
        <begin position="4"/>
        <end position="240"/>
    </location>
</feature>
<feature type="compositionally biased region" description="Basic and acidic residues" evidence="7">
    <location>
        <begin position="27"/>
        <end position="42"/>
    </location>
</feature>
<feature type="modified residue" description="N-acetylalanine" evidence="8">
    <location>
        <position position="2"/>
    </location>
</feature>
<feature type="modified residue" description="Phosphoserine" evidence="2">
    <location>
        <position position="51"/>
    </location>
</feature>
<feature type="modified residue" description="Phosphothreonine" evidence="3">
    <location>
        <position position="72"/>
    </location>
</feature>
<feature type="modified residue" description="Phosphoserine" evidence="5">
    <location>
        <position position="179"/>
    </location>
</feature>
<feature type="modified residue" description="Phosphothreonine" evidence="3">
    <location>
        <position position="216"/>
    </location>
</feature>
<feature type="splice variant" id="VSP_025995" description="In isoform 2 and isoform 3." evidence="9">
    <original>RCREMDEQIRLMDQNLKCLSAAE</original>
    <variation>KCSELEEELKNVTNNLKSLEAQA</variation>
    <location>
        <begin position="153"/>
        <end position="175"/>
    </location>
</feature>
<feature type="splice variant" id="VSP_025996" description="In isoform 3." evidence="9">
    <original>DKLKCTKEEHLCTQRMLDQTLLDLNEM</original>
    <variation>ERLYSQLERNRLLSNELKLTLHGLCD</variation>
    <location>
        <begin position="222"/>
        <end position="248"/>
    </location>
</feature>
<feature type="splice variant" id="VSP_025997" description="In isoform 2." evidence="9">
    <original>KLKCTKEEHLCTQRMLDQTLLDLNEM</original>
    <variation>ELYAQKLKYKAISDELDHALNDMTSI</variation>
    <location>
        <begin position="223"/>
        <end position="248"/>
    </location>
</feature>
<feature type="sequence conflict" description="In Ref. 2; CAA51382." evidence="10" ref="2">
    <original>A</original>
    <variation>V</variation>
    <location>
        <position position="83"/>
    </location>
</feature>
<protein>
    <recommendedName>
        <fullName>Tropomyosin alpha-3 chain</fullName>
    </recommendedName>
    <alternativeName>
        <fullName>Gamma-tropomyosin</fullName>
    </alternativeName>
    <alternativeName>
        <fullName>Tropomyosin-3</fullName>
    </alternativeName>
    <alternativeName>
        <fullName>Tropomyosin-5</fullName>
    </alternativeName>
</protein>